<sequence length="740" mass="84147">MEHTYQYSWIIPFIPLPVPILLGGGLLLFPTATKNLRRTWSFLSIFLLSIVMIFSLYLSIQQIIISCIHQNVWSWTINNDLSFEFGYFIDPLTCIMLILITTVGILVLIYSDNYMSHDQGYLRFFAYMGFFNTSMLGLVTSSNLIQIYFFWELVGMCSYLLIGFWFTRPIAANACQKAFVTNRVGDFGLLLGILGLYWVTGSFEFQDLFEIFNNLILNNRVNLLFLTLCAFLLFMGPIAKSAQFPLHVWLPDAMEGPTPISALIHAATMVAAGIFLVARLLPLFIVIPSIMYIISLIGIITILLGATLALAQKDIKRGLAYSTMSQLGYMMLALGMGSYRSALFHLITHAYSKALLFLGSGSIIHSMEAIVGYSPDKSQNMILMGGLTKHVPITKTAFLLGTLSLCGIPPLACFWSKDEILTDSLLFSPIFAIIACSTAGLTAFYMFRIYLLTFEGHLNTYFLNYSGKKSSSFYSISLWGKEDEKKINRNFCLVPLLTMNNKKGASFFSKKTYKINNNVRNKTLITVANGALNKRTFYYPHESDNTILFPMLVLLLFTLFIGAIGIPLNQEGFDILSKLFTPSINLLHKNSTNFVDWYEFFRNATFSVSIAFFGIFIAYCLYKPFYSSLLNLTLLNSFQKWSSNPICWEKLINCLYNWSYNRAYIDTFYKKSLTESIRRLAKQIHFFDKRIIDGITNGVGITSFFVAEFTKYIGGSRISSYLFLYLSYVFLFFLFLKILN</sequence>
<comment type="function">
    <text evidence="1">NDH shuttles electrons from NAD(P)H:plastoquinone, via FMN and iron-sulfur (Fe-S) centers, to quinones in the photosynthetic chain and possibly in a chloroplast respiratory chain. The immediate electron acceptor for the enzyme in this species is believed to be plastoquinone. Couples the redox reaction to proton translocation, and thus conserves the redox energy in a proton gradient (By similarity).</text>
</comment>
<comment type="catalytic activity">
    <reaction>
        <text>a plastoquinone + NADH + (n+1) H(+)(in) = a plastoquinol + NAD(+) + n H(+)(out)</text>
        <dbReference type="Rhea" id="RHEA:42608"/>
        <dbReference type="Rhea" id="RHEA-COMP:9561"/>
        <dbReference type="Rhea" id="RHEA-COMP:9562"/>
        <dbReference type="ChEBI" id="CHEBI:15378"/>
        <dbReference type="ChEBI" id="CHEBI:17757"/>
        <dbReference type="ChEBI" id="CHEBI:57540"/>
        <dbReference type="ChEBI" id="CHEBI:57945"/>
        <dbReference type="ChEBI" id="CHEBI:62192"/>
    </reaction>
</comment>
<comment type="catalytic activity">
    <reaction>
        <text>a plastoquinone + NADPH + (n+1) H(+)(in) = a plastoquinol + NADP(+) + n H(+)(out)</text>
        <dbReference type="Rhea" id="RHEA:42612"/>
        <dbReference type="Rhea" id="RHEA-COMP:9561"/>
        <dbReference type="Rhea" id="RHEA-COMP:9562"/>
        <dbReference type="ChEBI" id="CHEBI:15378"/>
        <dbReference type="ChEBI" id="CHEBI:17757"/>
        <dbReference type="ChEBI" id="CHEBI:57783"/>
        <dbReference type="ChEBI" id="CHEBI:58349"/>
        <dbReference type="ChEBI" id="CHEBI:62192"/>
    </reaction>
</comment>
<comment type="subunit">
    <text evidence="1">NDH is composed of at least 16 different subunits, 5 of which are encoded in the nucleus.</text>
</comment>
<comment type="subcellular location">
    <subcellularLocation>
        <location evidence="1">Plastid</location>
        <location evidence="1">Chloroplast thylakoid membrane</location>
        <topology evidence="1">Multi-pass membrane protein</topology>
    </subcellularLocation>
</comment>
<comment type="similarity">
    <text evidence="3">Belongs to the complex I subunit 5 family.</text>
</comment>
<accession>A4QJG3</accession>
<geneLocation type="chloroplast"/>
<organism>
    <name type="scientific">Aethionema cordifolium</name>
    <name type="common">Lebanon stonecress</name>
    <dbReference type="NCBI Taxonomy" id="434059"/>
    <lineage>
        <taxon>Eukaryota</taxon>
        <taxon>Viridiplantae</taxon>
        <taxon>Streptophyta</taxon>
        <taxon>Embryophyta</taxon>
        <taxon>Tracheophyta</taxon>
        <taxon>Spermatophyta</taxon>
        <taxon>Magnoliopsida</taxon>
        <taxon>eudicotyledons</taxon>
        <taxon>Gunneridae</taxon>
        <taxon>Pentapetalae</taxon>
        <taxon>rosids</taxon>
        <taxon>malvids</taxon>
        <taxon>Brassicales</taxon>
        <taxon>Brassicaceae</taxon>
        <taxon>Aethionemeae</taxon>
        <taxon>Aethionema</taxon>
    </lineage>
</organism>
<proteinExistence type="inferred from homology"/>
<protein>
    <recommendedName>
        <fullName>NAD(P)H-quinone oxidoreductase subunit 5, chloroplastic</fullName>
        <ecNumber>7.1.1.-</ecNumber>
    </recommendedName>
    <alternativeName>
        <fullName>NAD(P)H dehydrogenase subunit 5</fullName>
    </alternativeName>
    <alternativeName>
        <fullName>NADH-plastoquinone oxidoreductase subunit 5</fullName>
    </alternativeName>
</protein>
<feature type="chain" id="PRO_0000360906" description="NAD(P)H-quinone oxidoreductase subunit 5, chloroplastic">
    <location>
        <begin position="1"/>
        <end position="740"/>
    </location>
</feature>
<feature type="transmembrane region" description="Helical" evidence="2">
    <location>
        <begin position="9"/>
        <end position="29"/>
    </location>
</feature>
<feature type="transmembrane region" description="Helical" evidence="2">
    <location>
        <begin position="40"/>
        <end position="60"/>
    </location>
</feature>
<feature type="transmembrane region" description="Helical" evidence="2">
    <location>
        <begin position="89"/>
        <end position="109"/>
    </location>
</feature>
<feature type="transmembrane region" description="Helical" evidence="2">
    <location>
        <begin position="125"/>
        <end position="145"/>
    </location>
</feature>
<feature type="transmembrane region" description="Helical" evidence="2">
    <location>
        <begin position="147"/>
        <end position="167"/>
    </location>
</feature>
<feature type="transmembrane region" description="Helical" evidence="2">
    <location>
        <begin position="185"/>
        <end position="205"/>
    </location>
</feature>
<feature type="transmembrane region" description="Helical" evidence="2">
    <location>
        <begin position="221"/>
        <end position="241"/>
    </location>
</feature>
<feature type="transmembrane region" description="Helical" evidence="2">
    <location>
        <begin position="258"/>
        <end position="278"/>
    </location>
</feature>
<feature type="transmembrane region" description="Helical" evidence="2">
    <location>
        <begin position="283"/>
        <end position="303"/>
    </location>
</feature>
<feature type="transmembrane region" description="Helical" evidence="2">
    <location>
        <begin position="327"/>
        <end position="347"/>
    </location>
</feature>
<feature type="transmembrane region" description="Helical" evidence="2">
    <location>
        <begin position="354"/>
        <end position="374"/>
    </location>
</feature>
<feature type="transmembrane region" description="Helical" evidence="2">
    <location>
        <begin position="396"/>
        <end position="416"/>
    </location>
</feature>
<feature type="transmembrane region" description="Helical" evidence="2">
    <location>
        <begin position="425"/>
        <end position="445"/>
    </location>
</feature>
<feature type="transmembrane region" description="Helical" evidence="2">
    <location>
        <begin position="547"/>
        <end position="567"/>
    </location>
</feature>
<feature type="transmembrane region" description="Helical" evidence="2">
    <location>
        <begin position="606"/>
        <end position="626"/>
    </location>
</feature>
<feature type="transmembrane region" description="Helical" evidence="2">
    <location>
        <begin position="718"/>
        <end position="738"/>
    </location>
</feature>
<evidence type="ECO:0000250" key="1"/>
<evidence type="ECO:0000255" key="2"/>
<evidence type="ECO:0000305" key="3"/>
<reference key="1">
    <citation type="submission" date="2007-03" db="EMBL/GenBank/DDBJ databases">
        <title>Sequencing analysis of Aethionema coridifolium chloroplast DNA.</title>
        <authorList>
            <person name="Hosouchi T."/>
            <person name="Tsuruoka H."/>
            <person name="Kotani H."/>
        </authorList>
    </citation>
    <scope>NUCLEOTIDE SEQUENCE [LARGE SCALE GENOMIC DNA]</scope>
</reference>
<gene>
    <name type="primary">ndhF</name>
</gene>
<keyword id="KW-0150">Chloroplast</keyword>
<keyword id="KW-0472">Membrane</keyword>
<keyword id="KW-0520">NAD</keyword>
<keyword id="KW-0521">NADP</keyword>
<keyword id="KW-0934">Plastid</keyword>
<keyword id="KW-0618">Plastoquinone</keyword>
<keyword id="KW-0874">Quinone</keyword>
<keyword id="KW-0793">Thylakoid</keyword>
<keyword id="KW-1278">Translocase</keyword>
<keyword id="KW-0812">Transmembrane</keyword>
<keyword id="KW-1133">Transmembrane helix</keyword>
<keyword id="KW-0813">Transport</keyword>
<name>NU5C_AETCO</name>
<dbReference type="EC" id="7.1.1.-"/>
<dbReference type="EMBL" id="AP009366">
    <property type="protein sequence ID" value="BAF49818.1"/>
    <property type="molecule type" value="Genomic_DNA"/>
</dbReference>
<dbReference type="RefSeq" id="YP_001122993.1">
    <property type="nucleotide sequence ID" value="NC_009265.1"/>
</dbReference>
<dbReference type="SMR" id="A4QJG3"/>
<dbReference type="GeneID" id="4968571"/>
<dbReference type="GO" id="GO:0009535">
    <property type="term" value="C:chloroplast thylakoid membrane"/>
    <property type="evidence" value="ECO:0007669"/>
    <property type="project" value="UniProtKB-SubCell"/>
</dbReference>
<dbReference type="GO" id="GO:0008137">
    <property type="term" value="F:NADH dehydrogenase (ubiquinone) activity"/>
    <property type="evidence" value="ECO:0007669"/>
    <property type="project" value="InterPro"/>
</dbReference>
<dbReference type="GO" id="GO:0048038">
    <property type="term" value="F:quinone binding"/>
    <property type="evidence" value="ECO:0007669"/>
    <property type="project" value="UniProtKB-KW"/>
</dbReference>
<dbReference type="GO" id="GO:0042773">
    <property type="term" value="P:ATP synthesis coupled electron transport"/>
    <property type="evidence" value="ECO:0007669"/>
    <property type="project" value="InterPro"/>
</dbReference>
<dbReference type="GO" id="GO:0015990">
    <property type="term" value="P:electron transport coupled proton transport"/>
    <property type="evidence" value="ECO:0007669"/>
    <property type="project" value="TreeGrafter"/>
</dbReference>
<dbReference type="Gene3D" id="1.20.5.2700">
    <property type="match status" value="1"/>
</dbReference>
<dbReference type="InterPro" id="IPR002128">
    <property type="entry name" value="NADH_UbQ_OxRdtase_chlpt_su5_C"/>
</dbReference>
<dbReference type="InterPro" id="IPR018393">
    <property type="entry name" value="NADHpl_OxRdtase_5_subgr"/>
</dbReference>
<dbReference type="InterPro" id="IPR001750">
    <property type="entry name" value="ND/Mrp_TM"/>
</dbReference>
<dbReference type="InterPro" id="IPR003945">
    <property type="entry name" value="NU5C-like"/>
</dbReference>
<dbReference type="InterPro" id="IPR001516">
    <property type="entry name" value="Proton_antipo_N"/>
</dbReference>
<dbReference type="NCBIfam" id="TIGR01974">
    <property type="entry name" value="NDH_I_L"/>
    <property type="match status" value="1"/>
</dbReference>
<dbReference type="NCBIfam" id="NF005141">
    <property type="entry name" value="PRK06590.1"/>
    <property type="match status" value="1"/>
</dbReference>
<dbReference type="PANTHER" id="PTHR42829">
    <property type="entry name" value="NADH-UBIQUINONE OXIDOREDUCTASE CHAIN 5"/>
    <property type="match status" value="1"/>
</dbReference>
<dbReference type="PANTHER" id="PTHR42829:SF2">
    <property type="entry name" value="NADH-UBIQUINONE OXIDOREDUCTASE CHAIN 5"/>
    <property type="match status" value="1"/>
</dbReference>
<dbReference type="Pfam" id="PF01010">
    <property type="entry name" value="Proton_antipo_C"/>
    <property type="match status" value="1"/>
</dbReference>
<dbReference type="Pfam" id="PF00361">
    <property type="entry name" value="Proton_antipo_M"/>
    <property type="match status" value="1"/>
</dbReference>
<dbReference type="Pfam" id="PF00662">
    <property type="entry name" value="Proton_antipo_N"/>
    <property type="match status" value="1"/>
</dbReference>
<dbReference type="PRINTS" id="PR01434">
    <property type="entry name" value="NADHDHGNASE5"/>
</dbReference>
<dbReference type="PRINTS" id="PR01435">
    <property type="entry name" value="NPOXDRDTASE5"/>
</dbReference>